<keyword id="KW-0227">DNA damage</keyword>
<keyword id="KW-0234">DNA repair</keyword>
<keyword id="KW-0238">DNA-binding</keyword>
<keyword id="KW-0326">Glycosidase</keyword>
<keyword id="KW-0378">Hydrolase</keyword>
<keyword id="KW-0456">Lyase</keyword>
<keyword id="KW-0479">Metal-binding</keyword>
<keyword id="KW-0511">Multifunctional enzyme</keyword>
<keyword id="KW-1185">Reference proteome</keyword>
<keyword id="KW-0862">Zinc</keyword>
<keyword id="KW-0863">Zinc-finger</keyword>
<feature type="initiator methionine" description="Removed" evidence="1">
    <location>
        <position position="1"/>
    </location>
</feature>
<feature type="chain" id="PRO_0000228483" description="Formamidopyrimidine-DNA glycosylase">
    <location>
        <begin position="2"/>
        <end position="271"/>
    </location>
</feature>
<feature type="zinc finger region" description="FPG-type" evidence="2">
    <location>
        <begin position="237"/>
        <end position="271"/>
    </location>
</feature>
<feature type="active site" description="Schiff-base intermediate with DNA" evidence="2">
    <location>
        <position position="2"/>
    </location>
</feature>
<feature type="active site" description="Proton donor" evidence="2">
    <location>
        <position position="3"/>
    </location>
</feature>
<feature type="active site" description="Proton donor; for beta-elimination activity" evidence="2">
    <location>
        <position position="58"/>
    </location>
</feature>
<feature type="active site" description="Proton donor; for delta-elimination activity" evidence="2">
    <location>
        <position position="261"/>
    </location>
</feature>
<feature type="binding site" evidence="2">
    <location>
        <position position="92"/>
    </location>
    <ligand>
        <name>DNA</name>
        <dbReference type="ChEBI" id="CHEBI:16991"/>
    </ligand>
</feature>
<feature type="binding site" evidence="2">
    <location>
        <position position="111"/>
    </location>
    <ligand>
        <name>DNA</name>
        <dbReference type="ChEBI" id="CHEBI:16991"/>
    </ligand>
</feature>
<feature type="binding site" evidence="2">
    <location>
        <position position="152"/>
    </location>
    <ligand>
        <name>DNA</name>
        <dbReference type="ChEBI" id="CHEBI:16991"/>
    </ligand>
</feature>
<gene>
    <name evidence="2" type="primary">mutM</name>
    <name evidence="2" type="synonym">fpg</name>
    <name type="ordered locus">Wbm0589</name>
</gene>
<evidence type="ECO:0000250" key="1"/>
<evidence type="ECO:0000255" key="2">
    <source>
        <dbReference type="HAMAP-Rule" id="MF_00103"/>
    </source>
</evidence>
<reference key="1">
    <citation type="journal article" date="2005" name="PLoS Biol.">
        <title>The Wolbachia genome of Brugia malayi: endosymbiont evolution within a human pathogenic nematode.</title>
        <authorList>
            <person name="Foster J."/>
            <person name="Ganatra M."/>
            <person name="Kamal I."/>
            <person name="Ware J."/>
            <person name="Makarova K."/>
            <person name="Ivanova N."/>
            <person name="Bhattacharyya A."/>
            <person name="Kapatral V."/>
            <person name="Kumar S."/>
            <person name="Posfai J."/>
            <person name="Vincze T."/>
            <person name="Ingram J."/>
            <person name="Moran L."/>
            <person name="Lapidus A."/>
            <person name="Omelchenko M."/>
            <person name="Kyrpides N."/>
            <person name="Ghedin E."/>
            <person name="Wang S."/>
            <person name="Goltsman E."/>
            <person name="Joukov V."/>
            <person name="Ostrovskaya O."/>
            <person name="Tsukerman K."/>
            <person name="Mazur M."/>
            <person name="Comb D."/>
            <person name="Koonin E."/>
            <person name="Slatko B."/>
        </authorList>
    </citation>
    <scope>NUCLEOTIDE SEQUENCE [LARGE SCALE GENOMIC DNA]</scope>
    <source>
        <strain>TRS</strain>
    </source>
</reference>
<protein>
    <recommendedName>
        <fullName evidence="2">Formamidopyrimidine-DNA glycosylase</fullName>
        <shortName evidence="2">Fapy-DNA glycosylase</shortName>
        <ecNumber evidence="2">3.2.2.23</ecNumber>
    </recommendedName>
    <alternativeName>
        <fullName evidence="2">DNA-(apurinic or apyrimidinic site) lyase MutM</fullName>
        <shortName evidence="2">AP lyase MutM</shortName>
        <ecNumber evidence="2">4.2.99.18</ecNumber>
    </alternativeName>
</protein>
<comment type="function">
    <text evidence="2">Involved in base excision repair of DNA damaged by oxidation or by mutagenic agents. Acts as a DNA glycosylase that recognizes and removes damaged bases. Has a preference for oxidized purines, such as 7,8-dihydro-8-oxoguanine (8-oxoG). Has AP (apurinic/apyrimidinic) lyase activity and introduces nicks in the DNA strand. Cleaves the DNA backbone by beta-delta elimination to generate a single-strand break at the site of the removed base with both 3'- and 5'-phosphates.</text>
</comment>
<comment type="catalytic activity">
    <reaction evidence="2">
        <text>Hydrolysis of DNA containing ring-opened 7-methylguanine residues, releasing 2,6-diamino-4-hydroxy-5-(N-methyl)formamidopyrimidine.</text>
        <dbReference type="EC" id="3.2.2.23"/>
    </reaction>
</comment>
<comment type="catalytic activity">
    <reaction evidence="2">
        <text>2'-deoxyribonucleotide-(2'-deoxyribose 5'-phosphate)-2'-deoxyribonucleotide-DNA = a 3'-end 2'-deoxyribonucleotide-(2,3-dehydro-2,3-deoxyribose 5'-phosphate)-DNA + a 5'-end 5'-phospho-2'-deoxyribonucleoside-DNA + H(+)</text>
        <dbReference type="Rhea" id="RHEA:66592"/>
        <dbReference type="Rhea" id="RHEA-COMP:13180"/>
        <dbReference type="Rhea" id="RHEA-COMP:16897"/>
        <dbReference type="Rhea" id="RHEA-COMP:17067"/>
        <dbReference type="ChEBI" id="CHEBI:15378"/>
        <dbReference type="ChEBI" id="CHEBI:136412"/>
        <dbReference type="ChEBI" id="CHEBI:157695"/>
        <dbReference type="ChEBI" id="CHEBI:167181"/>
        <dbReference type="EC" id="4.2.99.18"/>
    </reaction>
</comment>
<comment type="cofactor">
    <cofactor evidence="2">
        <name>Zn(2+)</name>
        <dbReference type="ChEBI" id="CHEBI:29105"/>
    </cofactor>
    <text evidence="2">Binds 1 zinc ion per subunit.</text>
</comment>
<comment type="subunit">
    <text evidence="2">Monomer.</text>
</comment>
<comment type="similarity">
    <text evidence="2">Belongs to the FPG family.</text>
</comment>
<organism>
    <name type="scientific">Wolbachia sp. subsp. Brugia malayi (strain TRS)</name>
    <dbReference type="NCBI Taxonomy" id="292805"/>
    <lineage>
        <taxon>Bacteria</taxon>
        <taxon>Pseudomonadati</taxon>
        <taxon>Pseudomonadota</taxon>
        <taxon>Alphaproteobacteria</taxon>
        <taxon>Rickettsiales</taxon>
        <taxon>Anaplasmataceae</taxon>
        <taxon>Wolbachieae</taxon>
        <taxon>Wolbachia</taxon>
    </lineage>
</organism>
<dbReference type="EC" id="3.2.2.23" evidence="2"/>
<dbReference type="EC" id="4.2.99.18" evidence="2"/>
<dbReference type="EMBL" id="AE017321">
    <property type="protein sequence ID" value="AAW71177.1"/>
    <property type="molecule type" value="Genomic_DNA"/>
</dbReference>
<dbReference type="RefSeq" id="WP_011256787.1">
    <property type="nucleotide sequence ID" value="NC_006833.1"/>
</dbReference>
<dbReference type="SMR" id="Q5GS47"/>
<dbReference type="STRING" id="292805.Wbm0589"/>
<dbReference type="KEGG" id="wbm:Wbm0589"/>
<dbReference type="eggNOG" id="COG0266">
    <property type="taxonomic scope" value="Bacteria"/>
</dbReference>
<dbReference type="HOGENOM" id="CLU_038423_1_1_5"/>
<dbReference type="Proteomes" id="UP000000534">
    <property type="component" value="Chromosome"/>
</dbReference>
<dbReference type="GO" id="GO:0034039">
    <property type="term" value="F:8-oxo-7,8-dihydroguanine DNA N-glycosylase activity"/>
    <property type="evidence" value="ECO:0007669"/>
    <property type="project" value="TreeGrafter"/>
</dbReference>
<dbReference type="GO" id="GO:0140078">
    <property type="term" value="F:class I DNA-(apurinic or apyrimidinic site) endonuclease activity"/>
    <property type="evidence" value="ECO:0007669"/>
    <property type="project" value="UniProtKB-EC"/>
</dbReference>
<dbReference type="GO" id="GO:0003684">
    <property type="term" value="F:damaged DNA binding"/>
    <property type="evidence" value="ECO:0007669"/>
    <property type="project" value="InterPro"/>
</dbReference>
<dbReference type="GO" id="GO:0008270">
    <property type="term" value="F:zinc ion binding"/>
    <property type="evidence" value="ECO:0007669"/>
    <property type="project" value="UniProtKB-UniRule"/>
</dbReference>
<dbReference type="GO" id="GO:0006284">
    <property type="term" value="P:base-excision repair"/>
    <property type="evidence" value="ECO:0007669"/>
    <property type="project" value="InterPro"/>
</dbReference>
<dbReference type="CDD" id="cd08966">
    <property type="entry name" value="EcFpg-like_N"/>
    <property type="match status" value="1"/>
</dbReference>
<dbReference type="FunFam" id="1.10.8.50:FF:000003">
    <property type="entry name" value="Formamidopyrimidine-DNA glycosylase"/>
    <property type="match status" value="1"/>
</dbReference>
<dbReference type="Gene3D" id="1.10.8.50">
    <property type="match status" value="1"/>
</dbReference>
<dbReference type="Gene3D" id="3.20.190.10">
    <property type="entry name" value="MutM-like, N-terminal"/>
    <property type="match status" value="1"/>
</dbReference>
<dbReference type="HAMAP" id="MF_00103">
    <property type="entry name" value="Fapy_DNA_glycosyl"/>
    <property type="match status" value="1"/>
</dbReference>
<dbReference type="InterPro" id="IPR015886">
    <property type="entry name" value="DNA_glyclase/AP_lyase_DNA-bd"/>
</dbReference>
<dbReference type="InterPro" id="IPR015887">
    <property type="entry name" value="DNA_glyclase_Znf_dom_DNA_BS"/>
</dbReference>
<dbReference type="InterPro" id="IPR020629">
    <property type="entry name" value="Formamido-pyr_DNA_Glyclase"/>
</dbReference>
<dbReference type="InterPro" id="IPR012319">
    <property type="entry name" value="FPG_cat"/>
</dbReference>
<dbReference type="InterPro" id="IPR035937">
    <property type="entry name" value="MutM-like_N-ter"/>
</dbReference>
<dbReference type="InterPro" id="IPR010979">
    <property type="entry name" value="Ribosomal_uS13-like_H2TH"/>
</dbReference>
<dbReference type="InterPro" id="IPR000214">
    <property type="entry name" value="Znf_DNA_glyclase/AP_lyase"/>
</dbReference>
<dbReference type="InterPro" id="IPR010663">
    <property type="entry name" value="Znf_FPG/IleRS"/>
</dbReference>
<dbReference type="NCBIfam" id="TIGR00577">
    <property type="entry name" value="fpg"/>
    <property type="match status" value="1"/>
</dbReference>
<dbReference type="NCBIfam" id="NF002211">
    <property type="entry name" value="PRK01103.1"/>
    <property type="match status" value="1"/>
</dbReference>
<dbReference type="PANTHER" id="PTHR22993">
    <property type="entry name" value="FORMAMIDOPYRIMIDINE-DNA GLYCOSYLASE"/>
    <property type="match status" value="1"/>
</dbReference>
<dbReference type="PANTHER" id="PTHR22993:SF9">
    <property type="entry name" value="FORMAMIDOPYRIMIDINE-DNA GLYCOSYLASE"/>
    <property type="match status" value="1"/>
</dbReference>
<dbReference type="Pfam" id="PF01149">
    <property type="entry name" value="Fapy_DNA_glyco"/>
    <property type="match status" value="1"/>
</dbReference>
<dbReference type="Pfam" id="PF06831">
    <property type="entry name" value="H2TH"/>
    <property type="match status" value="1"/>
</dbReference>
<dbReference type="Pfam" id="PF06827">
    <property type="entry name" value="zf-FPG_IleRS"/>
    <property type="match status" value="1"/>
</dbReference>
<dbReference type="SMART" id="SM00898">
    <property type="entry name" value="Fapy_DNA_glyco"/>
    <property type="match status" value="1"/>
</dbReference>
<dbReference type="SMART" id="SM01232">
    <property type="entry name" value="H2TH"/>
    <property type="match status" value="1"/>
</dbReference>
<dbReference type="SUPFAM" id="SSF57716">
    <property type="entry name" value="Glucocorticoid receptor-like (DNA-binding domain)"/>
    <property type="match status" value="1"/>
</dbReference>
<dbReference type="SUPFAM" id="SSF81624">
    <property type="entry name" value="N-terminal domain of MutM-like DNA repair proteins"/>
    <property type="match status" value="1"/>
</dbReference>
<dbReference type="SUPFAM" id="SSF46946">
    <property type="entry name" value="S13-like H2TH domain"/>
    <property type="match status" value="1"/>
</dbReference>
<dbReference type="PROSITE" id="PS51068">
    <property type="entry name" value="FPG_CAT"/>
    <property type="match status" value="1"/>
</dbReference>
<dbReference type="PROSITE" id="PS01242">
    <property type="entry name" value="ZF_FPG_1"/>
    <property type="match status" value="1"/>
</dbReference>
<dbReference type="PROSITE" id="PS51066">
    <property type="entry name" value="ZF_FPG_2"/>
    <property type="match status" value="1"/>
</dbReference>
<accession>Q5GS47</accession>
<proteinExistence type="inferred from homology"/>
<name>FPG_WOLTR</name>
<sequence length="271" mass="30729">MPELPEVEIISNFLFDKIKNKQISGVTVNNWNLRVPITQNIDDVIKGKVINNIKRRGKYIIWHIDNDIVVTVHLGMSGKLIYAKGEQAQNKHDHVIFSFSDNTSIIFNDPRKFGLVIILNKEQEVNFFNDFGIEPFTDEFNGDYLQKLLKSKKVNIKSALMNNKLIVGIGNIYASESLFRARISPLRSAQDLTYKECEKLATEIKNTLSDAIIAGGSTLKDYAQPSGSVGYFQNSFYVYGKVQKPCKICNNTITLIRQNGRSTYFCNACQN</sequence>